<accession>Q2SA07</accession>
<protein>
    <recommendedName>
        <fullName evidence="1">GTP cyclohydrolase-2</fullName>
        <ecNumber evidence="1">3.5.4.25</ecNumber>
    </recommendedName>
    <alternativeName>
        <fullName evidence="1">GTP cyclohydrolase II</fullName>
    </alternativeName>
</protein>
<dbReference type="EC" id="3.5.4.25" evidence="1"/>
<dbReference type="EMBL" id="CP000155">
    <property type="protein sequence ID" value="ABC32517.1"/>
    <property type="molecule type" value="Genomic_DNA"/>
</dbReference>
<dbReference type="RefSeq" id="WP_011399576.1">
    <property type="nucleotide sequence ID" value="NC_007645.1"/>
</dbReference>
<dbReference type="SMR" id="Q2SA07"/>
<dbReference type="STRING" id="349521.HCH_05867"/>
<dbReference type="KEGG" id="hch:HCH_05867"/>
<dbReference type="eggNOG" id="COG0807">
    <property type="taxonomic scope" value="Bacteria"/>
</dbReference>
<dbReference type="HOGENOM" id="CLU_020273_2_1_6"/>
<dbReference type="OrthoDB" id="9793111at2"/>
<dbReference type="UniPathway" id="UPA00275">
    <property type="reaction ID" value="UER00400"/>
</dbReference>
<dbReference type="Proteomes" id="UP000000238">
    <property type="component" value="Chromosome"/>
</dbReference>
<dbReference type="GO" id="GO:0005829">
    <property type="term" value="C:cytosol"/>
    <property type="evidence" value="ECO:0007669"/>
    <property type="project" value="TreeGrafter"/>
</dbReference>
<dbReference type="GO" id="GO:0005525">
    <property type="term" value="F:GTP binding"/>
    <property type="evidence" value="ECO:0007669"/>
    <property type="project" value="UniProtKB-KW"/>
</dbReference>
<dbReference type="GO" id="GO:0003935">
    <property type="term" value="F:GTP cyclohydrolase II activity"/>
    <property type="evidence" value="ECO:0007669"/>
    <property type="project" value="UniProtKB-UniRule"/>
</dbReference>
<dbReference type="GO" id="GO:0008270">
    <property type="term" value="F:zinc ion binding"/>
    <property type="evidence" value="ECO:0007669"/>
    <property type="project" value="UniProtKB-UniRule"/>
</dbReference>
<dbReference type="GO" id="GO:0009231">
    <property type="term" value="P:riboflavin biosynthetic process"/>
    <property type="evidence" value="ECO:0007669"/>
    <property type="project" value="UniProtKB-UniRule"/>
</dbReference>
<dbReference type="CDD" id="cd00641">
    <property type="entry name" value="GTP_cyclohydro2"/>
    <property type="match status" value="1"/>
</dbReference>
<dbReference type="FunFam" id="3.40.50.10990:FF:000002">
    <property type="entry name" value="GTP cyclohydrolase-2"/>
    <property type="match status" value="1"/>
</dbReference>
<dbReference type="Gene3D" id="3.40.50.10990">
    <property type="entry name" value="GTP cyclohydrolase II"/>
    <property type="match status" value="1"/>
</dbReference>
<dbReference type="HAMAP" id="MF_00179">
    <property type="entry name" value="RibA"/>
    <property type="match status" value="1"/>
</dbReference>
<dbReference type="InterPro" id="IPR032677">
    <property type="entry name" value="GTP_cyclohydro_II"/>
</dbReference>
<dbReference type="InterPro" id="IPR000926">
    <property type="entry name" value="RibA"/>
</dbReference>
<dbReference type="InterPro" id="IPR036144">
    <property type="entry name" value="RibA-like_sf"/>
</dbReference>
<dbReference type="NCBIfam" id="NF001591">
    <property type="entry name" value="PRK00393.1"/>
    <property type="match status" value="1"/>
</dbReference>
<dbReference type="NCBIfam" id="TIGR00505">
    <property type="entry name" value="ribA"/>
    <property type="match status" value="1"/>
</dbReference>
<dbReference type="PANTHER" id="PTHR21327:SF18">
    <property type="entry name" value="3,4-DIHYDROXY-2-BUTANONE 4-PHOSPHATE SYNTHASE"/>
    <property type="match status" value="1"/>
</dbReference>
<dbReference type="PANTHER" id="PTHR21327">
    <property type="entry name" value="GTP CYCLOHYDROLASE II-RELATED"/>
    <property type="match status" value="1"/>
</dbReference>
<dbReference type="Pfam" id="PF00925">
    <property type="entry name" value="GTP_cyclohydro2"/>
    <property type="match status" value="1"/>
</dbReference>
<dbReference type="SUPFAM" id="SSF142695">
    <property type="entry name" value="RibA-like"/>
    <property type="match status" value="1"/>
</dbReference>
<proteinExistence type="inferred from homology"/>
<feature type="chain" id="PRO_1000040566" description="GTP cyclohydrolase-2">
    <location>
        <begin position="1"/>
        <end position="207"/>
    </location>
</feature>
<feature type="active site" description="Proton acceptor" evidence="1">
    <location>
        <position position="126"/>
    </location>
</feature>
<feature type="active site" description="Nucleophile" evidence="1">
    <location>
        <position position="128"/>
    </location>
</feature>
<feature type="binding site" evidence="1">
    <location>
        <begin position="49"/>
        <end position="53"/>
    </location>
    <ligand>
        <name>GTP</name>
        <dbReference type="ChEBI" id="CHEBI:37565"/>
    </ligand>
</feature>
<feature type="binding site" evidence="1">
    <location>
        <position position="54"/>
    </location>
    <ligand>
        <name>Zn(2+)</name>
        <dbReference type="ChEBI" id="CHEBI:29105"/>
        <note>catalytic</note>
    </ligand>
</feature>
<feature type="binding site" evidence="1">
    <location>
        <position position="65"/>
    </location>
    <ligand>
        <name>Zn(2+)</name>
        <dbReference type="ChEBI" id="CHEBI:29105"/>
        <note>catalytic</note>
    </ligand>
</feature>
<feature type="binding site" evidence="1">
    <location>
        <position position="67"/>
    </location>
    <ligand>
        <name>Zn(2+)</name>
        <dbReference type="ChEBI" id="CHEBI:29105"/>
        <note>catalytic</note>
    </ligand>
</feature>
<feature type="binding site" evidence="1">
    <location>
        <position position="70"/>
    </location>
    <ligand>
        <name>GTP</name>
        <dbReference type="ChEBI" id="CHEBI:37565"/>
    </ligand>
</feature>
<feature type="binding site" evidence="1">
    <location>
        <begin position="92"/>
        <end position="94"/>
    </location>
    <ligand>
        <name>GTP</name>
        <dbReference type="ChEBI" id="CHEBI:37565"/>
    </ligand>
</feature>
<feature type="binding site" evidence="1">
    <location>
        <position position="114"/>
    </location>
    <ligand>
        <name>GTP</name>
        <dbReference type="ChEBI" id="CHEBI:37565"/>
    </ligand>
</feature>
<feature type="binding site" evidence="1">
    <location>
        <position position="149"/>
    </location>
    <ligand>
        <name>GTP</name>
        <dbReference type="ChEBI" id="CHEBI:37565"/>
    </ligand>
</feature>
<feature type="binding site" evidence="1">
    <location>
        <position position="154"/>
    </location>
    <ligand>
        <name>GTP</name>
        <dbReference type="ChEBI" id="CHEBI:37565"/>
    </ligand>
</feature>
<comment type="function">
    <text evidence="1">Catalyzes the conversion of GTP to 2,5-diamino-6-ribosylamino-4(3H)-pyrimidinone 5'-phosphate (DARP), formate and pyrophosphate.</text>
</comment>
<comment type="catalytic activity">
    <reaction evidence="1">
        <text>GTP + 4 H2O = 2,5-diamino-6-hydroxy-4-(5-phosphoribosylamino)-pyrimidine + formate + 2 phosphate + 3 H(+)</text>
        <dbReference type="Rhea" id="RHEA:23704"/>
        <dbReference type="ChEBI" id="CHEBI:15377"/>
        <dbReference type="ChEBI" id="CHEBI:15378"/>
        <dbReference type="ChEBI" id="CHEBI:15740"/>
        <dbReference type="ChEBI" id="CHEBI:37565"/>
        <dbReference type="ChEBI" id="CHEBI:43474"/>
        <dbReference type="ChEBI" id="CHEBI:58614"/>
        <dbReference type="EC" id="3.5.4.25"/>
    </reaction>
</comment>
<comment type="cofactor">
    <cofactor evidence="1">
        <name>Zn(2+)</name>
        <dbReference type="ChEBI" id="CHEBI:29105"/>
    </cofactor>
    <text evidence="1">Binds 1 zinc ion per subunit.</text>
</comment>
<comment type="pathway">
    <text evidence="1">Cofactor biosynthesis; riboflavin biosynthesis; 5-amino-6-(D-ribitylamino)uracil from GTP: step 1/4.</text>
</comment>
<comment type="similarity">
    <text evidence="1">Belongs to the GTP cyclohydrolase II family.</text>
</comment>
<organism>
    <name type="scientific">Hahella chejuensis (strain KCTC 2396)</name>
    <dbReference type="NCBI Taxonomy" id="349521"/>
    <lineage>
        <taxon>Bacteria</taxon>
        <taxon>Pseudomonadati</taxon>
        <taxon>Pseudomonadota</taxon>
        <taxon>Gammaproteobacteria</taxon>
        <taxon>Oceanospirillales</taxon>
        <taxon>Hahellaceae</taxon>
        <taxon>Hahella</taxon>
    </lineage>
</organism>
<sequence length="207" mass="22828">MSVTYVASCKLPTPFGVFDMHGFQEVGTQKEHIALTLGDIGDGASVLARTHSECLTGDALFSMRCDCGYQLDEALRSIAAEGRGILLYLRQEGRGIGLLNKIRAYNLQDQGADTVEANEQLGFAADMRDYSMCKPMLYHLGISRIRLMTNNPRKVDSLTKLGIEVVERVPLEVGRNPHNRNYLATKAGKLGHLLTTHQDDDYVVAAK</sequence>
<name>RIBA_HAHCH</name>
<keyword id="KW-0342">GTP-binding</keyword>
<keyword id="KW-0378">Hydrolase</keyword>
<keyword id="KW-0479">Metal-binding</keyword>
<keyword id="KW-0547">Nucleotide-binding</keyword>
<keyword id="KW-1185">Reference proteome</keyword>
<keyword id="KW-0686">Riboflavin biosynthesis</keyword>
<keyword id="KW-0862">Zinc</keyword>
<evidence type="ECO:0000255" key="1">
    <source>
        <dbReference type="HAMAP-Rule" id="MF_00179"/>
    </source>
</evidence>
<gene>
    <name evidence="1" type="primary">ribA</name>
    <name type="ordered locus">HCH_05867</name>
</gene>
<reference key="1">
    <citation type="journal article" date="2005" name="Nucleic Acids Res.">
        <title>Genomic blueprint of Hahella chejuensis, a marine microbe producing an algicidal agent.</title>
        <authorList>
            <person name="Jeong H."/>
            <person name="Yim J.H."/>
            <person name="Lee C."/>
            <person name="Choi S.-H."/>
            <person name="Park Y.K."/>
            <person name="Yoon S.H."/>
            <person name="Hur C.-G."/>
            <person name="Kang H.-Y."/>
            <person name="Kim D."/>
            <person name="Lee H.H."/>
            <person name="Park K.H."/>
            <person name="Park S.-H."/>
            <person name="Park H.-S."/>
            <person name="Lee H.K."/>
            <person name="Oh T.K."/>
            <person name="Kim J.F."/>
        </authorList>
    </citation>
    <scope>NUCLEOTIDE SEQUENCE [LARGE SCALE GENOMIC DNA]</scope>
    <source>
        <strain>KCTC 2396</strain>
    </source>
</reference>